<sequence>MLYRLLSIVQRQRTSPGWQTWSSARSSTSTAEAHSIALPAQAQVVICGGGIMGTSVAYHLSKMGWQDIVLLEQGRLAAGSTRFCAGILSTARHSSVEQKMANYSNKLYHQLEQETGIQTGYLRTGSISLAQTQDRLISLKRINSRLNVVGIPSEIISPKKVAELHPLLNVHDLVGAMYVPEDAVVSSADVALALASAASQNGVQIYDRTSVLHVLIKKGQVTGVETDKGQIECQYFVNCAGQWAYELGLSNEEPLSIPLHACEHFYLLTRPWDTPLQSNTPTIVDADGRIYIRNWQGGILSGGFEKNPKPIFTEGKNQLEIQNLREDWDHFEPLLSSLLRRMPALETLEILKLVNCPETFTPDMKCIMGESPVVQGYFVLAGMNSAGLSLGGGAGKFLAEWMVYGYPSENVWELDLQRFGALQSSRTFLRHRVMEVMPLIYDLKVPRWDFQTGRQLRTSPLYDRLDAQGARWMEKHGFERPKYFVPPNKDLLALEQSKTFYKPDWFDIVESEVKCCKEAVCVIDMSSFTKFEITSTGDEALESLQYLFCNDLDVPVGHIVHTGMLNEYGGYENDCSIARLTKRSFFMISPTDQQVHCWAWLNKYLPKDSNLLLEDVTWKYTALNLIGPRAVDVLSELSYAPMTPDHFPTLFCKEMSVGYANGIRVMSMTHTGEPGFMLYIPIEYALHVYNEVMSVGQKYGIRNAGYYALRSLRIEKFFAFWGQDLNTLTTPLECGGESRVKLEKGIDFIGRDALLQQKQTGVYKRLAMFILDDHDTDLDLWPWWGEPIYRNGKYAGKTTSSAYSYTLERHVCLGYVHNFSEDSGEEQVVTTDFINRGEYEIDIAGHRFQAKAKLYPVTSFFTHKRRKDDVELSDFHGK</sequence>
<accession>Q7TSQ8</accession>
<accession>Q6ZPF5</accession>
<keyword id="KW-0496">Mitochondrion</keyword>
<keyword id="KW-1185">Reference proteome</keyword>
<keyword id="KW-0809">Transit peptide</keyword>
<gene>
    <name type="primary">Pdpr</name>
    <name type="synonym">Kiaa1990</name>
</gene>
<name>PDPR_MOUSE</name>
<comment type="function">
    <text evidence="1">Decreases the sensitivity of PDP1 to magnesium ions, and this inhibition is reversed by the polyamine spermine.</text>
</comment>
<comment type="subunit">
    <text evidence="1">Heterodimer of a catalytic (PDP1) and a regulatory (PDPR) subunit.</text>
</comment>
<comment type="subcellular location">
    <subcellularLocation>
        <location evidence="1">Mitochondrion matrix</location>
    </subcellularLocation>
</comment>
<comment type="similarity">
    <text evidence="3">Belongs to the GcvT family.</text>
</comment>
<comment type="sequence caution" evidence="3">
    <conflict type="erroneous initiation">
        <sequence resource="EMBL-CDS" id="BAC98282"/>
    </conflict>
</comment>
<feature type="transit peptide" description="Mitochondrion" evidence="2">
    <location>
        <begin position="1"/>
        <end position="93"/>
    </location>
</feature>
<feature type="chain" id="PRO_0000328741" description="Pyruvate dehydrogenase phosphatase regulatory subunit, mitochondrial">
    <location>
        <begin position="94"/>
        <end position="878"/>
    </location>
</feature>
<feature type="sequence conflict" description="In Ref. 2; BAC98282." evidence="3" ref="2">
    <original>P</original>
    <variation>H</variation>
    <location>
        <position position="438"/>
    </location>
</feature>
<reference key="1">
    <citation type="submission" date="2003-01" db="EMBL/GenBank/DDBJ databases">
        <title>An alternatively spliced form of a gene encoding pyruvate dehydrogenase phosphatase regulatory subunit.</title>
        <authorList>
            <person name="Jang J.S."/>
            <person name="Ackerman S.L."/>
        </authorList>
    </citation>
    <scope>NUCLEOTIDE SEQUENCE [MRNA]</scope>
    <source>
        <strain>C57BL/6J</strain>
        <tissue>Cerebellum</tissue>
    </source>
</reference>
<reference key="2">
    <citation type="journal article" date="2003" name="DNA Res.">
        <title>Prediction of the coding sequences of mouse homologues of KIAA gene: III. The complete nucleotide sequences of 500 mouse KIAA-homologous cDNAs identified by screening of terminal sequences of cDNA clones randomly sampled from size-fractionated libraries.</title>
        <authorList>
            <person name="Okazaki N."/>
            <person name="Kikuno R."/>
            <person name="Ohara R."/>
            <person name="Inamoto S."/>
            <person name="Koseki H."/>
            <person name="Hiraoka S."/>
            <person name="Saga Y."/>
            <person name="Nagase T."/>
            <person name="Ohara O."/>
            <person name="Koga H."/>
        </authorList>
    </citation>
    <scope>NUCLEOTIDE SEQUENCE [LARGE SCALE MRNA]</scope>
    <source>
        <tissue>Brain</tissue>
    </source>
</reference>
<reference key="3">
    <citation type="journal article" date="2004" name="Genome Res.">
        <title>The status, quality, and expansion of the NIH full-length cDNA project: the Mammalian Gene Collection (MGC).</title>
        <authorList>
            <consortium name="The MGC Project Team"/>
        </authorList>
    </citation>
    <scope>NUCLEOTIDE SEQUENCE [LARGE SCALE MRNA]</scope>
    <source>
        <tissue>Brain</tissue>
    </source>
</reference>
<reference key="4">
    <citation type="journal article" date="2010" name="Cell">
        <title>A tissue-specific atlas of mouse protein phosphorylation and expression.</title>
        <authorList>
            <person name="Huttlin E.L."/>
            <person name="Jedrychowski M.P."/>
            <person name="Elias J.E."/>
            <person name="Goswami T."/>
            <person name="Rad R."/>
            <person name="Beausoleil S.A."/>
            <person name="Villen J."/>
            <person name="Haas W."/>
            <person name="Sowa M.E."/>
            <person name="Gygi S.P."/>
        </authorList>
    </citation>
    <scope>IDENTIFICATION BY MASS SPECTROMETRY [LARGE SCALE ANALYSIS]</scope>
    <source>
        <tissue>Brain</tissue>
        <tissue>Brown adipose tissue</tissue>
        <tissue>Heart</tissue>
        <tissue>Kidney</tissue>
        <tissue>Lung</tissue>
        <tissue>Spleen</tissue>
        <tissue>Testis</tissue>
    </source>
</reference>
<protein>
    <recommendedName>
        <fullName>Pyruvate dehydrogenase phosphatase regulatory subunit, mitochondrial</fullName>
        <shortName>PDPr</shortName>
    </recommendedName>
</protein>
<organism>
    <name type="scientific">Mus musculus</name>
    <name type="common">Mouse</name>
    <dbReference type="NCBI Taxonomy" id="10090"/>
    <lineage>
        <taxon>Eukaryota</taxon>
        <taxon>Metazoa</taxon>
        <taxon>Chordata</taxon>
        <taxon>Craniata</taxon>
        <taxon>Vertebrata</taxon>
        <taxon>Euteleostomi</taxon>
        <taxon>Mammalia</taxon>
        <taxon>Eutheria</taxon>
        <taxon>Euarchontoglires</taxon>
        <taxon>Glires</taxon>
        <taxon>Rodentia</taxon>
        <taxon>Myomorpha</taxon>
        <taxon>Muroidea</taxon>
        <taxon>Muridae</taxon>
        <taxon>Murinae</taxon>
        <taxon>Mus</taxon>
        <taxon>Mus</taxon>
    </lineage>
</organism>
<dbReference type="EMBL" id="AY223867">
    <property type="protein sequence ID" value="AAP20649.1"/>
    <property type="molecule type" value="mRNA"/>
</dbReference>
<dbReference type="EMBL" id="AK129472">
    <property type="protein sequence ID" value="BAC98282.1"/>
    <property type="status" value="ALT_INIT"/>
    <property type="molecule type" value="mRNA"/>
</dbReference>
<dbReference type="EMBL" id="BC120745">
    <property type="protein sequence ID" value="AAI20746.1"/>
    <property type="molecule type" value="mRNA"/>
</dbReference>
<dbReference type="EMBL" id="BC125425">
    <property type="protein sequence ID" value="AAI25426.1"/>
    <property type="molecule type" value="mRNA"/>
</dbReference>
<dbReference type="CCDS" id="CCDS22670.1"/>
<dbReference type="RefSeq" id="NP_938050.1">
    <property type="nucleotide sequence ID" value="NM_198308.1"/>
</dbReference>
<dbReference type="RefSeq" id="XP_006531147.1">
    <property type="nucleotide sequence ID" value="XM_006531084.5"/>
</dbReference>
<dbReference type="SMR" id="Q7TSQ8"/>
<dbReference type="BioGRID" id="235328">
    <property type="interactions" value="3"/>
</dbReference>
<dbReference type="FunCoup" id="Q7TSQ8">
    <property type="interactions" value="3112"/>
</dbReference>
<dbReference type="STRING" id="10090.ENSMUSP00000046639"/>
<dbReference type="iPTMnet" id="Q7TSQ8"/>
<dbReference type="PhosphoSitePlus" id="Q7TSQ8"/>
<dbReference type="SwissPalm" id="Q7TSQ8"/>
<dbReference type="jPOST" id="Q7TSQ8"/>
<dbReference type="PaxDb" id="10090-ENSMUSP00000046639"/>
<dbReference type="PeptideAtlas" id="Q7TSQ8"/>
<dbReference type="ProteomicsDB" id="288091"/>
<dbReference type="Pumba" id="Q7TSQ8"/>
<dbReference type="Antibodypedia" id="66437">
    <property type="antibodies" value="65 antibodies from 15 providers"/>
</dbReference>
<dbReference type="DNASU" id="319518"/>
<dbReference type="Ensembl" id="ENSMUST00000039333.10">
    <property type="protein sequence ID" value="ENSMUSP00000046639.4"/>
    <property type="gene ID" value="ENSMUSG00000033624.11"/>
</dbReference>
<dbReference type="GeneID" id="319518"/>
<dbReference type="KEGG" id="mmu:319518"/>
<dbReference type="UCSC" id="uc009nlw.1">
    <property type="organism name" value="mouse"/>
</dbReference>
<dbReference type="AGR" id="MGI:2442188"/>
<dbReference type="CTD" id="55066"/>
<dbReference type="MGI" id="MGI:2442188">
    <property type="gene designation" value="Pdpr"/>
</dbReference>
<dbReference type="VEuPathDB" id="HostDB:ENSMUSG00000033624"/>
<dbReference type="eggNOG" id="KOG2844">
    <property type="taxonomic scope" value="Eukaryota"/>
</dbReference>
<dbReference type="GeneTree" id="ENSGT00940000159082"/>
<dbReference type="HOGENOM" id="CLU_007884_11_0_1"/>
<dbReference type="InParanoid" id="Q7TSQ8"/>
<dbReference type="OMA" id="TKFPDRE"/>
<dbReference type="OrthoDB" id="429143at2759"/>
<dbReference type="PhylomeDB" id="Q7TSQ8"/>
<dbReference type="TreeFam" id="TF314735"/>
<dbReference type="Reactome" id="R-MMU-204174">
    <property type="pathway name" value="Regulation of pyruvate dehydrogenase (PDH) complex"/>
</dbReference>
<dbReference type="BioGRID-ORCS" id="319518">
    <property type="hits" value="0 hits in 77 CRISPR screens"/>
</dbReference>
<dbReference type="ChiTaRS" id="Pdpr">
    <property type="organism name" value="mouse"/>
</dbReference>
<dbReference type="PRO" id="PR:Q7TSQ8"/>
<dbReference type="Proteomes" id="UP000000589">
    <property type="component" value="Chromosome 8"/>
</dbReference>
<dbReference type="RNAct" id="Q7TSQ8">
    <property type="molecule type" value="protein"/>
</dbReference>
<dbReference type="Bgee" id="ENSMUSG00000033624">
    <property type="expression patterns" value="Expressed in parotid gland and 219 other cell types or tissues"/>
</dbReference>
<dbReference type="ExpressionAtlas" id="Q7TSQ8">
    <property type="expression patterns" value="baseline and differential"/>
</dbReference>
<dbReference type="GO" id="GO:0005759">
    <property type="term" value="C:mitochondrial matrix"/>
    <property type="evidence" value="ECO:0007669"/>
    <property type="project" value="UniProtKB-SubCell"/>
</dbReference>
<dbReference type="GO" id="GO:0005739">
    <property type="term" value="C:mitochondrion"/>
    <property type="evidence" value="ECO:0007005"/>
    <property type="project" value="MGI"/>
</dbReference>
<dbReference type="FunFam" id="3.30.1360.120:FF:000046">
    <property type="entry name" value="Pyruvate dehydrogenase phosphatase regulatory mitochondrial"/>
    <property type="match status" value="1"/>
</dbReference>
<dbReference type="FunFam" id="3.30.70.1400:FF:000003">
    <property type="entry name" value="Pyruvate dehydrogenase phosphatase regulatory subunit"/>
    <property type="match status" value="1"/>
</dbReference>
<dbReference type="FunFam" id="2.40.30.110:FF:000004">
    <property type="entry name" value="Pyruvate dehydrogenase phosphatase regulatory subunit, mitochondrial"/>
    <property type="match status" value="1"/>
</dbReference>
<dbReference type="Gene3D" id="2.40.30.110">
    <property type="entry name" value="Aminomethyltransferase beta-barrel domains"/>
    <property type="match status" value="1"/>
</dbReference>
<dbReference type="Gene3D" id="3.30.70.1400">
    <property type="entry name" value="Aminomethyltransferase beta-barrel domains"/>
    <property type="match status" value="1"/>
</dbReference>
<dbReference type="Gene3D" id="3.30.9.10">
    <property type="entry name" value="D-Amino Acid Oxidase, subunit A, domain 2"/>
    <property type="match status" value="1"/>
</dbReference>
<dbReference type="Gene3D" id="3.50.50.60">
    <property type="entry name" value="FAD/NAD(P)-binding domain"/>
    <property type="match status" value="1"/>
</dbReference>
<dbReference type="Gene3D" id="3.30.1360.120">
    <property type="entry name" value="Probable tRNA modification gtpase trme, domain 1"/>
    <property type="match status" value="1"/>
</dbReference>
<dbReference type="InterPro" id="IPR006076">
    <property type="entry name" value="FAD-dep_OxRdtase"/>
</dbReference>
<dbReference type="InterPro" id="IPR036188">
    <property type="entry name" value="FAD/NAD-bd_sf"/>
</dbReference>
<dbReference type="InterPro" id="IPR032503">
    <property type="entry name" value="FAO_M"/>
</dbReference>
<dbReference type="InterPro" id="IPR013977">
    <property type="entry name" value="GCST_C"/>
</dbReference>
<dbReference type="InterPro" id="IPR006222">
    <property type="entry name" value="GCV_T_N"/>
</dbReference>
<dbReference type="InterPro" id="IPR029043">
    <property type="entry name" value="GcvT/YgfZ_C"/>
</dbReference>
<dbReference type="InterPro" id="IPR027266">
    <property type="entry name" value="TrmE/GcvT_dom1"/>
</dbReference>
<dbReference type="PANTHER" id="PTHR13847:SF193">
    <property type="entry name" value="PYRUVATE DEHYDROGENASE PHOSPHATASE REGULATORY SUBUNIT, MITOCHONDRIAL"/>
    <property type="match status" value="1"/>
</dbReference>
<dbReference type="PANTHER" id="PTHR13847">
    <property type="entry name" value="SARCOSINE DEHYDROGENASE-RELATED"/>
    <property type="match status" value="1"/>
</dbReference>
<dbReference type="Pfam" id="PF01266">
    <property type="entry name" value="DAO"/>
    <property type="match status" value="1"/>
</dbReference>
<dbReference type="Pfam" id="PF16350">
    <property type="entry name" value="FAO_M"/>
    <property type="match status" value="1"/>
</dbReference>
<dbReference type="Pfam" id="PF01571">
    <property type="entry name" value="GCV_T"/>
    <property type="match status" value="1"/>
</dbReference>
<dbReference type="Pfam" id="PF08669">
    <property type="entry name" value="GCV_T_C"/>
    <property type="match status" value="1"/>
</dbReference>
<dbReference type="SUPFAM" id="SSF101790">
    <property type="entry name" value="Aminomethyltransferase beta-barrel domain"/>
    <property type="match status" value="1"/>
</dbReference>
<dbReference type="SUPFAM" id="SSF54373">
    <property type="entry name" value="FAD-linked reductases, C-terminal domain"/>
    <property type="match status" value="1"/>
</dbReference>
<dbReference type="SUPFAM" id="SSF51905">
    <property type="entry name" value="FAD/NAD(P)-binding domain"/>
    <property type="match status" value="1"/>
</dbReference>
<dbReference type="SUPFAM" id="SSF103025">
    <property type="entry name" value="Folate-binding domain"/>
    <property type="match status" value="1"/>
</dbReference>
<evidence type="ECO:0000250" key="1"/>
<evidence type="ECO:0000255" key="2"/>
<evidence type="ECO:0000305" key="3"/>
<proteinExistence type="evidence at protein level"/>